<proteinExistence type="inferred from homology"/>
<name>DNAT_SALSV</name>
<organism>
    <name type="scientific">Salmonella schwarzengrund (strain CVM19633)</name>
    <dbReference type="NCBI Taxonomy" id="439843"/>
    <lineage>
        <taxon>Bacteria</taxon>
        <taxon>Pseudomonadati</taxon>
        <taxon>Pseudomonadota</taxon>
        <taxon>Gammaproteobacteria</taxon>
        <taxon>Enterobacterales</taxon>
        <taxon>Enterobacteriaceae</taxon>
        <taxon>Salmonella</taxon>
    </lineage>
</organism>
<reference key="1">
    <citation type="journal article" date="2011" name="J. Bacteriol.">
        <title>Comparative genomics of 28 Salmonella enterica isolates: evidence for CRISPR-mediated adaptive sublineage evolution.</title>
        <authorList>
            <person name="Fricke W.F."/>
            <person name="Mammel M.K."/>
            <person name="McDermott P.F."/>
            <person name="Tartera C."/>
            <person name="White D.G."/>
            <person name="Leclerc J.E."/>
            <person name="Ravel J."/>
            <person name="Cebula T.A."/>
        </authorList>
    </citation>
    <scope>NUCLEOTIDE SEQUENCE [LARGE SCALE GENOMIC DNA]</scope>
    <source>
        <strain>CVM19633</strain>
    </source>
</reference>
<protein>
    <recommendedName>
        <fullName evidence="1">Replication restart protein DnaT</fullName>
    </recommendedName>
</protein>
<keyword id="KW-0235">DNA replication</keyword>
<keyword id="KW-0238">DNA-binding</keyword>
<keyword id="KW-0639">Primosome</keyword>
<dbReference type="EMBL" id="CP001127">
    <property type="protein sequence ID" value="ACF88851.1"/>
    <property type="molecule type" value="Genomic_DNA"/>
</dbReference>
<dbReference type="RefSeq" id="WP_000098573.1">
    <property type="nucleotide sequence ID" value="NC_011094.1"/>
</dbReference>
<dbReference type="SMR" id="B4TU21"/>
<dbReference type="KEGG" id="sew:SeSA_A4798"/>
<dbReference type="HOGENOM" id="CLU_1501592_0_0_6"/>
<dbReference type="Proteomes" id="UP000001865">
    <property type="component" value="Chromosome"/>
</dbReference>
<dbReference type="GO" id="GO:1990077">
    <property type="term" value="C:primosome complex"/>
    <property type="evidence" value="ECO:0007669"/>
    <property type="project" value="UniProtKB-KW"/>
</dbReference>
<dbReference type="GO" id="GO:0006269">
    <property type="term" value="P:DNA replication, synthesis of primer"/>
    <property type="evidence" value="ECO:0007669"/>
    <property type="project" value="UniProtKB-UniRule"/>
</dbReference>
<dbReference type="Gene3D" id="1.10.8.1180">
    <property type="match status" value="1"/>
</dbReference>
<dbReference type="HAMAP" id="MF_01061">
    <property type="entry name" value="DnaT"/>
    <property type="match status" value="1"/>
</dbReference>
<dbReference type="InterPro" id="IPR020917">
    <property type="entry name" value="DnaT"/>
</dbReference>
<dbReference type="InterPro" id="IPR040480">
    <property type="entry name" value="DnaT_DNA_bind"/>
</dbReference>
<dbReference type="NCBIfam" id="NF002770">
    <property type="entry name" value="PRK02854.1"/>
    <property type="match status" value="1"/>
</dbReference>
<dbReference type="Pfam" id="PF17948">
    <property type="entry name" value="DnaT"/>
    <property type="match status" value="1"/>
</dbReference>
<gene>
    <name evidence="1" type="primary">dnaT</name>
    <name type="ordered locus">SeSA_A4798</name>
</gene>
<accession>B4TU21</accession>
<comment type="function">
    <text evidence="1">Involved in the restart of stalled replication forks, which reloads the replicative helicase on sites other than the origin of replication. Can function in multiple replication restart pathways. Displaces ssDNA from a PriB-ssDNA complex. Probably forms a spiral filament on ssDNA.</text>
</comment>
<comment type="subunit">
    <text evidence="1">Homooligomerizes. Interacts with PriB. Component of the replication restart primosome. Primosome assembly occurs via a 'hand-off' mechanism. PriA binds to replication forks, subsequently PriB then DnaT bind; DnaT then displaces ssDNA to generate the helicase loading substrate.</text>
</comment>
<comment type="similarity">
    <text evidence="1">Belongs to the DnaT family.</text>
</comment>
<sequence length="179" mass="19478">MSSRILTSDVIGIDALLHDHHAVLAKSTGGAVAVFANNAPAFYAVTPARMAELLALEEKLSRPGSDVALDAQFYEEPEAAPVAIPCGKFAMYPAWQPDADFQRQAALWGVALREPVTAEELAAFIAYWQAEGKVFHHIQWQQKLARSVQISRSSNGGMPQRDINSVSEPDNHIPPGFRG</sequence>
<evidence type="ECO:0000255" key="1">
    <source>
        <dbReference type="HAMAP-Rule" id="MF_01061"/>
    </source>
</evidence>
<evidence type="ECO:0000256" key="2">
    <source>
        <dbReference type="SAM" id="MobiDB-lite"/>
    </source>
</evidence>
<feature type="chain" id="PRO_1000136444" description="Replication restart protein DnaT">
    <location>
        <begin position="1"/>
        <end position="179"/>
    </location>
</feature>
<feature type="region of interest" description="Disordered" evidence="2">
    <location>
        <begin position="151"/>
        <end position="179"/>
    </location>
</feature>
<feature type="compositionally biased region" description="Polar residues" evidence="2">
    <location>
        <begin position="151"/>
        <end position="168"/>
    </location>
</feature>